<proteinExistence type="inferred from homology"/>
<keyword id="KW-0450">Lipoyl</keyword>
<keyword id="KW-1185">Reference proteome</keyword>
<protein>
    <recommendedName>
        <fullName evidence="1">Glycine cleavage system H protein</fullName>
    </recommendedName>
</protein>
<sequence>MKTVAGLLYSKDHEWVKVEGNEAYIGITDFAQHALGEIVFVELPEVDDEIAQGDAFSVVESVKAASDAYSPVSGKVLEVNEELDGAPELLNEDAFANWIIKVELTNPSELEGLLSDKEYAEFCEKEA</sequence>
<reference key="1">
    <citation type="submission" date="2007-10" db="EMBL/GenBank/DDBJ databases">
        <title>Complete genome of Alkaliphilus oremlandii OhILAs.</title>
        <authorList>
            <person name="Copeland A."/>
            <person name="Lucas S."/>
            <person name="Lapidus A."/>
            <person name="Barry K."/>
            <person name="Detter J.C."/>
            <person name="Glavina del Rio T."/>
            <person name="Hammon N."/>
            <person name="Israni S."/>
            <person name="Dalin E."/>
            <person name="Tice H."/>
            <person name="Pitluck S."/>
            <person name="Chain P."/>
            <person name="Malfatti S."/>
            <person name="Shin M."/>
            <person name="Vergez L."/>
            <person name="Schmutz J."/>
            <person name="Larimer F."/>
            <person name="Land M."/>
            <person name="Hauser L."/>
            <person name="Kyrpides N."/>
            <person name="Mikhailova N."/>
            <person name="Stolz J.F."/>
            <person name="Dawson A."/>
            <person name="Fisher E."/>
            <person name="Crable B."/>
            <person name="Perera E."/>
            <person name="Lisak J."/>
            <person name="Ranganathan M."/>
            <person name="Basu P."/>
            <person name="Richardson P."/>
        </authorList>
    </citation>
    <scope>NUCLEOTIDE SEQUENCE [LARGE SCALE GENOMIC DNA]</scope>
    <source>
        <strain>OhILAs</strain>
    </source>
</reference>
<evidence type="ECO:0000255" key="1">
    <source>
        <dbReference type="HAMAP-Rule" id="MF_00272"/>
    </source>
</evidence>
<evidence type="ECO:0000255" key="2">
    <source>
        <dbReference type="PROSITE-ProRule" id="PRU01066"/>
    </source>
</evidence>
<comment type="function">
    <text evidence="1">The glycine cleavage system catalyzes the degradation of glycine. The H protein shuttles the methylamine group of glycine from the P protein to the T protein.</text>
</comment>
<comment type="cofactor">
    <cofactor evidence="1">
        <name>(R)-lipoate</name>
        <dbReference type="ChEBI" id="CHEBI:83088"/>
    </cofactor>
    <text evidence="1">Binds 1 lipoyl cofactor covalently.</text>
</comment>
<comment type="subunit">
    <text evidence="1">The glycine cleavage system is composed of four proteins: P, T, L and H.</text>
</comment>
<comment type="similarity">
    <text evidence="1">Belongs to the GcvH family.</text>
</comment>
<gene>
    <name evidence="1" type="primary">gcvH</name>
    <name type="ordered locus">Clos_0066</name>
</gene>
<accession>A8MEG5</accession>
<feature type="chain" id="PRO_1000059176" description="Glycine cleavage system H protein">
    <location>
        <begin position="1"/>
        <end position="127"/>
    </location>
</feature>
<feature type="domain" description="Lipoyl-binding" evidence="2">
    <location>
        <begin position="22"/>
        <end position="103"/>
    </location>
</feature>
<feature type="modified residue" description="N6-lipoyllysine" evidence="1">
    <location>
        <position position="63"/>
    </location>
</feature>
<dbReference type="EMBL" id="CP000853">
    <property type="protein sequence ID" value="ABW17636.1"/>
    <property type="molecule type" value="Genomic_DNA"/>
</dbReference>
<dbReference type="RefSeq" id="WP_012157951.1">
    <property type="nucleotide sequence ID" value="NC_009922.1"/>
</dbReference>
<dbReference type="SMR" id="A8MEG5"/>
<dbReference type="STRING" id="350688.Clos_0066"/>
<dbReference type="KEGG" id="aoe:Clos_0066"/>
<dbReference type="eggNOG" id="COG0509">
    <property type="taxonomic scope" value="Bacteria"/>
</dbReference>
<dbReference type="HOGENOM" id="CLU_097408_2_2_9"/>
<dbReference type="OrthoDB" id="9796712at2"/>
<dbReference type="Proteomes" id="UP000000269">
    <property type="component" value="Chromosome"/>
</dbReference>
<dbReference type="GO" id="GO:0005737">
    <property type="term" value="C:cytoplasm"/>
    <property type="evidence" value="ECO:0007669"/>
    <property type="project" value="TreeGrafter"/>
</dbReference>
<dbReference type="GO" id="GO:0005960">
    <property type="term" value="C:glycine cleavage complex"/>
    <property type="evidence" value="ECO:0007669"/>
    <property type="project" value="InterPro"/>
</dbReference>
<dbReference type="GO" id="GO:0019464">
    <property type="term" value="P:glycine decarboxylation via glycine cleavage system"/>
    <property type="evidence" value="ECO:0007669"/>
    <property type="project" value="UniProtKB-UniRule"/>
</dbReference>
<dbReference type="CDD" id="cd06848">
    <property type="entry name" value="GCS_H"/>
    <property type="match status" value="1"/>
</dbReference>
<dbReference type="Gene3D" id="2.40.50.100">
    <property type="match status" value="1"/>
</dbReference>
<dbReference type="HAMAP" id="MF_00272">
    <property type="entry name" value="GcvH"/>
    <property type="match status" value="1"/>
</dbReference>
<dbReference type="InterPro" id="IPR000089">
    <property type="entry name" value="Biotin_lipoyl"/>
</dbReference>
<dbReference type="InterPro" id="IPR002930">
    <property type="entry name" value="GCV_H"/>
</dbReference>
<dbReference type="InterPro" id="IPR033753">
    <property type="entry name" value="GCV_H/Fam206"/>
</dbReference>
<dbReference type="InterPro" id="IPR017453">
    <property type="entry name" value="GCV_H_sub"/>
</dbReference>
<dbReference type="InterPro" id="IPR011053">
    <property type="entry name" value="Single_hybrid_motif"/>
</dbReference>
<dbReference type="NCBIfam" id="TIGR00527">
    <property type="entry name" value="gcvH"/>
    <property type="match status" value="1"/>
</dbReference>
<dbReference type="NCBIfam" id="NF002270">
    <property type="entry name" value="PRK01202.1"/>
    <property type="match status" value="1"/>
</dbReference>
<dbReference type="PANTHER" id="PTHR11715">
    <property type="entry name" value="GLYCINE CLEAVAGE SYSTEM H PROTEIN"/>
    <property type="match status" value="1"/>
</dbReference>
<dbReference type="PANTHER" id="PTHR11715:SF3">
    <property type="entry name" value="GLYCINE CLEAVAGE SYSTEM H PROTEIN-RELATED"/>
    <property type="match status" value="1"/>
</dbReference>
<dbReference type="Pfam" id="PF01597">
    <property type="entry name" value="GCV_H"/>
    <property type="match status" value="1"/>
</dbReference>
<dbReference type="SUPFAM" id="SSF51230">
    <property type="entry name" value="Single hybrid motif"/>
    <property type="match status" value="1"/>
</dbReference>
<dbReference type="PROSITE" id="PS50968">
    <property type="entry name" value="BIOTINYL_LIPOYL"/>
    <property type="match status" value="1"/>
</dbReference>
<organism>
    <name type="scientific">Alkaliphilus oremlandii (strain OhILAs)</name>
    <name type="common">Clostridium oremlandii (strain OhILAs)</name>
    <dbReference type="NCBI Taxonomy" id="350688"/>
    <lineage>
        <taxon>Bacteria</taxon>
        <taxon>Bacillati</taxon>
        <taxon>Bacillota</taxon>
        <taxon>Clostridia</taxon>
        <taxon>Peptostreptococcales</taxon>
        <taxon>Natronincolaceae</taxon>
        <taxon>Alkaliphilus</taxon>
    </lineage>
</organism>
<name>GCSH_ALKOO</name>